<name>O10T2_HUMAN</name>
<protein>
    <recommendedName>
        <fullName>Olfactory receptor 10T2</fullName>
    </recommendedName>
    <alternativeName>
        <fullName>Olfactory receptor OR1-3</fullName>
    </alternativeName>
</protein>
<dbReference type="EMBL" id="AB065643">
    <property type="protein sequence ID" value="BAC05869.1"/>
    <property type="molecule type" value="Genomic_DNA"/>
</dbReference>
<dbReference type="EMBL" id="AL121986">
    <property type="status" value="NOT_ANNOTATED_CDS"/>
    <property type="molecule type" value="Genomic_DNA"/>
</dbReference>
<dbReference type="EMBL" id="BK004364">
    <property type="protein sequence ID" value="DAA04762.1"/>
    <property type="molecule type" value="Genomic_DNA"/>
</dbReference>
<dbReference type="CCDS" id="CCDS30895.1"/>
<dbReference type="RefSeq" id="NP_001004475.1">
    <property type="nucleotide sequence ID" value="NM_001004475.1"/>
</dbReference>
<dbReference type="SMR" id="Q8NGX3"/>
<dbReference type="FunCoup" id="Q8NGX3">
    <property type="interactions" value="417"/>
</dbReference>
<dbReference type="STRING" id="9606.ENSP00000334115"/>
<dbReference type="GlyCosmos" id="Q8NGX3">
    <property type="glycosylation" value="1 site, No reported glycans"/>
</dbReference>
<dbReference type="GlyGen" id="Q8NGX3">
    <property type="glycosylation" value="1 site"/>
</dbReference>
<dbReference type="iPTMnet" id="Q8NGX3"/>
<dbReference type="PhosphoSitePlus" id="Q8NGX3"/>
<dbReference type="BioMuta" id="OR10T2"/>
<dbReference type="DMDM" id="38372780"/>
<dbReference type="MassIVE" id="Q8NGX3"/>
<dbReference type="PaxDb" id="9606-ENSP00000334115"/>
<dbReference type="PeptideAtlas" id="Q8NGX3"/>
<dbReference type="Antibodypedia" id="57095">
    <property type="antibodies" value="85 antibodies from 19 providers"/>
</dbReference>
<dbReference type="DNASU" id="128360"/>
<dbReference type="Ensembl" id="ENST00000334438.1">
    <property type="protein sequence ID" value="ENSP00000334115.1"/>
    <property type="gene ID" value="ENSG00000186306.1"/>
</dbReference>
<dbReference type="GeneID" id="128360"/>
<dbReference type="KEGG" id="hsa:128360"/>
<dbReference type="MANE-Select" id="ENST00000334438.1">
    <property type="protein sequence ID" value="ENSP00000334115.1"/>
    <property type="RefSeq nucleotide sequence ID" value="NM_001004475.1"/>
    <property type="RefSeq protein sequence ID" value="NP_001004475.1"/>
</dbReference>
<dbReference type="UCSC" id="uc010pih.2">
    <property type="organism name" value="human"/>
</dbReference>
<dbReference type="AGR" id="HGNC:14816"/>
<dbReference type="CTD" id="128360"/>
<dbReference type="GeneCards" id="OR10T2"/>
<dbReference type="HGNC" id="HGNC:14816">
    <property type="gene designation" value="OR10T2"/>
</dbReference>
<dbReference type="HPA" id="ENSG00000186306">
    <property type="expression patterns" value="Not detected"/>
</dbReference>
<dbReference type="neXtProt" id="NX_Q8NGX3"/>
<dbReference type="PharmGKB" id="PA32001"/>
<dbReference type="VEuPathDB" id="HostDB:ENSG00000186306"/>
<dbReference type="eggNOG" id="ENOG502QVH7">
    <property type="taxonomic scope" value="Eukaryota"/>
</dbReference>
<dbReference type="GeneTree" id="ENSGT00940000164107"/>
<dbReference type="HOGENOM" id="CLU_012526_1_0_1"/>
<dbReference type="InParanoid" id="Q8NGX3"/>
<dbReference type="OMA" id="YFCDMAP"/>
<dbReference type="OrthoDB" id="9975554at2759"/>
<dbReference type="PAN-GO" id="Q8NGX3">
    <property type="GO annotations" value="4 GO annotations based on evolutionary models"/>
</dbReference>
<dbReference type="PhylomeDB" id="Q8NGX3"/>
<dbReference type="TreeFam" id="TF337249"/>
<dbReference type="PathwayCommons" id="Q8NGX3"/>
<dbReference type="Reactome" id="R-HSA-9752946">
    <property type="pathway name" value="Expression and translocation of olfactory receptors"/>
</dbReference>
<dbReference type="BioGRID-ORCS" id="128360">
    <property type="hits" value="12 hits in 748 CRISPR screens"/>
</dbReference>
<dbReference type="GeneWiki" id="OR10T2"/>
<dbReference type="GenomeRNAi" id="128360"/>
<dbReference type="Pharos" id="Q8NGX3">
    <property type="development level" value="Tdark"/>
</dbReference>
<dbReference type="PRO" id="PR:Q8NGX3"/>
<dbReference type="Proteomes" id="UP000005640">
    <property type="component" value="Chromosome 1"/>
</dbReference>
<dbReference type="RNAct" id="Q8NGX3">
    <property type="molecule type" value="protein"/>
</dbReference>
<dbReference type="Bgee" id="ENSG00000186306">
    <property type="expression patterns" value="Expressed in primordial germ cell in gonad"/>
</dbReference>
<dbReference type="ExpressionAtlas" id="Q8NGX3">
    <property type="expression patterns" value="baseline and differential"/>
</dbReference>
<dbReference type="GO" id="GO:0016020">
    <property type="term" value="C:membrane"/>
    <property type="evidence" value="ECO:0000318"/>
    <property type="project" value="GO_Central"/>
</dbReference>
<dbReference type="GO" id="GO:0005886">
    <property type="term" value="C:plasma membrane"/>
    <property type="evidence" value="ECO:0007669"/>
    <property type="project" value="UniProtKB-SubCell"/>
</dbReference>
<dbReference type="GO" id="GO:0004930">
    <property type="term" value="F:G protein-coupled receptor activity"/>
    <property type="evidence" value="ECO:0007669"/>
    <property type="project" value="UniProtKB-KW"/>
</dbReference>
<dbReference type="GO" id="GO:0005549">
    <property type="term" value="F:odorant binding"/>
    <property type="evidence" value="ECO:0000318"/>
    <property type="project" value="GO_Central"/>
</dbReference>
<dbReference type="GO" id="GO:0004984">
    <property type="term" value="F:olfactory receptor activity"/>
    <property type="evidence" value="ECO:0000318"/>
    <property type="project" value="GO_Central"/>
</dbReference>
<dbReference type="GO" id="GO:0050911">
    <property type="term" value="P:detection of chemical stimulus involved in sensory perception of smell"/>
    <property type="evidence" value="ECO:0000318"/>
    <property type="project" value="GO_Central"/>
</dbReference>
<dbReference type="CDD" id="cd15225">
    <property type="entry name" value="7tmA_OR10A-like"/>
    <property type="match status" value="1"/>
</dbReference>
<dbReference type="FunFam" id="1.20.1070.10:FF:000001">
    <property type="entry name" value="Olfactory receptor"/>
    <property type="match status" value="1"/>
</dbReference>
<dbReference type="Gene3D" id="1.20.1070.10">
    <property type="entry name" value="Rhodopsin 7-helix transmembrane proteins"/>
    <property type="match status" value="1"/>
</dbReference>
<dbReference type="InterPro" id="IPR000276">
    <property type="entry name" value="GPCR_Rhodpsn"/>
</dbReference>
<dbReference type="InterPro" id="IPR017452">
    <property type="entry name" value="GPCR_Rhodpsn_7TM"/>
</dbReference>
<dbReference type="InterPro" id="IPR000725">
    <property type="entry name" value="Olfact_rcpt"/>
</dbReference>
<dbReference type="PANTHER" id="PTHR26453">
    <property type="entry name" value="OLFACTORY RECEPTOR"/>
    <property type="match status" value="1"/>
</dbReference>
<dbReference type="Pfam" id="PF13853">
    <property type="entry name" value="7tm_4"/>
    <property type="match status" value="1"/>
</dbReference>
<dbReference type="PRINTS" id="PR00237">
    <property type="entry name" value="GPCRRHODOPSN"/>
</dbReference>
<dbReference type="PRINTS" id="PR00245">
    <property type="entry name" value="OLFACTORYR"/>
</dbReference>
<dbReference type="SUPFAM" id="SSF81321">
    <property type="entry name" value="Family A G protein-coupled receptor-like"/>
    <property type="match status" value="1"/>
</dbReference>
<dbReference type="PROSITE" id="PS00237">
    <property type="entry name" value="G_PROTEIN_RECEP_F1_1"/>
    <property type="match status" value="1"/>
</dbReference>
<dbReference type="PROSITE" id="PS50262">
    <property type="entry name" value="G_PROTEIN_RECEP_F1_2"/>
    <property type="match status" value="1"/>
</dbReference>
<reference key="1">
    <citation type="submission" date="2001-07" db="EMBL/GenBank/DDBJ databases">
        <title>Genome-wide discovery and analysis of human seven transmembrane helix receptor genes.</title>
        <authorList>
            <person name="Suwa M."/>
            <person name="Sato T."/>
            <person name="Okouchi I."/>
            <person name="Arita M."/>
            <person name="Futami K."/>
            <person name="Matsumoto S."/>
            <person name="Tsutsumi S."/>
            <person name="Aburatani H."/>
            <person name="Asai K."/>
            <person name="Akiyama Y."/>
        </authorList>
    </citation>
    <scope>NUCLEOTIDE SEQUENCE [GENOMIC DNA]</scope>
</reference>
<reference key="2">
    <citation type="journal article" date="2006" name="Nature">
        <title>The DNA sequence and biological annotation of human chromosome 1.</title>
        <authorList>
            <person name="Gregory S.G."/>
            <person name="Barlow K.F."/>
            <person name="McLay K.E."/>
            <person name="Kaul R."/>
            <person name="Swarbreck D."/>
            <person name="Dunham A."/>
            <person name="Scott C.E."/>
            <person name="Howe K.L."/>
            <person name="Woodfine K."/>
            <person name="Spencer C.C.A."/>
            <person name="Jones M.C."/>
            <person name="Gillson C."/>
            <person name="Searle S."/>
            <person name="Zhou Y."/>
            <person name="Kokocinski F."/>
            <person name="McDonald L."/>
            <person name="Evans R."/>
            <person name="Phillips K."/>
            <person name="Atkinson A."/>
            <person name="Cooper R."/>
            <person name="Jones C."/>
            <person name="Hall R.E."/>
            <person name="Andrews T.D."/>
            <person name="Lloyd C."/>
            <person name="Ainscough R."/>
            <person name="Almeida J.P."/>
            <person name="Ambrose K.D."/>
            <person name="Anderson F."/>
            <person name="Andrew R.W."/>
            <person name="Ashwell R.I.S."/>
            <person name="Aubin K."/>
            <person name="Babbage A.K."/>
            <person name="Bagguley C.L."/>
            <person name="Bailey J."/>
            <person name="Beasley H."/>
            <person name="Bethel G."/>
            <person name="Bird C.P."/>
            <person name="Bray-Allen S."/>
            <person name="Brown J.Y."/>
            <person name="Brown A.J."/>
            <person name="Buckley D."/>
            <person name="Burton J."/>
            <person name="Bye J."/>
            <person name="Carder C."/>
            <person name="Chapman J.C."/>
            <person name="Clark S.Y."/>
            <person name="Clarke G."/>
            <person name="Clee C."/>
            <person name="Cobley V."/>
            <person name="Collier R.E."/>
            <person name="Corby N."/>
            <person name="Coville G.J."/>
            <person name="Davies J."/>
            <person name="Deadman R."/>
            <person name="Dunn M."/>
            <person name="Earthrowl M."/>
            <person name="Ellington A.G."/>
            <person name="Errington H."/>
            <person name="Frankish A."/>
            <person name="Frankland J."/>
            <person name="French L."/>
            <person name="Garner P."/>
            <person name="Garnett J."/>
            <person name="Gay L."/>
            <person name="Ghori M.R.J."/>
            <person name="Gibson R."/>
            <person name="Gilby L.M."/>
            <person name="Gillett W."/>
            <person name="Glithero R.J."/>
            <person name="Grafham D.V."/>
            <person name="Griffiths C."/>
            <person name="Griffiths-Jones S."/>
            <person name="Grocock R."/>
            <person name="Hammond S."/>
            <person name="Harrison E.S.I."/>
            <person name="Hart E."/>
            <person name="Haugen E."/>
            <person name="Heath P.D."/>
            <person name="Holmes S."/>
            <person name="Holt K."/>
            <person name="Howden P.J."/>
            <person name="Hunt A.R."/>
            <person name="Hunt S.E."/>
            <person name="Hunter G."/>
            <person name="Isherwood J."/>
            <person name="James R."/>
            <person name="Johnson C."/>
            <person name="Johnson D."/>
            <person name="Joy A."/>
            <person name="Kay M."/>
            <person name="Kershaw J.K."/>
            <person name="Kibukawa M."/>
            <person name="Kimberley A.M."/>
            <person name="King A."/>
            <person name="Knights A.J."/>
            <person name="Lad H."/>
            <person name="Laird G."/>
            <person name="Lawlor S."/>
            <person name="Leongamornlert D.A."/>
            <person name="Lloyd D.M."/>
            <person name="Loveland J."/>
            <person name="Lovell J."/>
            <person name="Lush M.J."/>
            <person name="Lyne R."/>
            <person name="Martin S."/>
            <person name="Mashreghi-Mohammadi M."/>
            <person name="Matthews L."/>
            <person name="Matthews N.S.W."/>
            <person name="McLaren S."/>
            <person name="Milne S."/>
            <person name="Mistry S."/>
            <person name="Moore M.J.F."/>
            <person name="Nickerson T."/>
            <person name="O'Dell C.N."/>
            <person name="Oliver K."/>
            <person name="Palmeiri A."/>
            <person name="Palmer S.A."/>
            <person name="Parker A."/>
            <person name="Patel D."/>
            <person name="Pearce A.V."/>
            <person name="Peck A.I."/>
            <person name="Pelan S."/>
            <person name="Phelps K."/>
            <person name="Phillimore B.J."/>
            <person name="Plumb R."/>
            <person name="Rajan J."/>
            <person name="Raymond C."/>
            <person name="Rouse G."/>
            <person name="Saenphimmachak C."/>
            <person name="Sehra H.K."/>
            <person name="Sheridan E."/>
            <person name="Shownkeen R."/>
            <person name="Sims S."/>
            <person name="Skuce C.D."/>
            <person name="Smith M."/>
            <person name="Steward C."/>
            <person name="Subramanian S."/>
            <person name="Sycamore N."/>
            <person name="Tracey A."/>
            <person name="Tromans A."/>
            <person name="Van Helmond Z."/>
            <person name="Wall M."/>
            <person name="Wallis J.M."/>
            <person name="White S."/>
            <person name="Whitehead S.L."/>
            <person name="Wilkinson J.E."/>
            <person name="Willey D.L."/>
            <person name="Williams H."/>
            <person name="Wilming L."/>
            <person name="Wray P.W."/>
            <person name="Wu Z."/>
            <person name="Coulson A."/>
            <person name="Vaudin M."/>
            <person name="Sulston J.E."/>
            <person name="Durbin R.M."/>
            <person name="Hubbard T."/>
            <person name="Wooster R."/>
            <person name="Dunham I."/>
            <person name="Carter N.P."/>
            <person name="McVean G."/>
            <person name="Ross M.T."/>
            <person name="Harrow J."/>
            <person name="Olson M.V."/>
            <person name="Beck S."/>
            <person name="Rogers J."/>
            <person name="Bentley D.R."/>
        </authorList>
    </citation>
    <scope>NUCLEOTIDE SEQUENCE [LARGE SCALE GENOMIC DNA]</scope>
</reference>
<reference key="3">
    <citation type="journal article" date="2004" name="Proc. Natl. Acad. Sci. U.S.A.">
        <title>The human olfactory receptor gene family.</title>
        <authorList>
            <person name="Malnic B."/>
            <person name="Godfrey P.A."/>
            <person name="Buck L.B."/>
        </authorList>
    </citation>
    <scope>IDENTIFICATION</scope>
</reference>
<reference key="4">
    <citation type="journal article" date="2004" name="Proc. Natl. Acad. Sci. U.S.A.">
        <authorList>
            <person name="Malnic B."/>
            <person name="Godfrey P.A."/>
            <person name="Buck L.B."/>
        </authorList>
    </citation>
    <scope>ERRATUM OF PUBMED:14983052</scope>
</reference>
<proteinExistence type="inferred from homology"/>
<feature type="chain" id="PRO_0000150717" description="Olfactory receptor 10T2">
    <location>
        <begin position="1"/>
        <end position="314"/>
    </location>
</feature>
<feature type="topological domain" description="Extracellular" evidence="1">
    <location>
        <begin position="1"/>
        <end position="26"/>
    </location>
</feature>
<feature type="transmembrane region" description="Helical; Name=1" evidence="1">
    <location>
        <begin position="27"/>
        <end position="47"/>
    </location>
</feature>
<feature type="topological domain" description="Cytoplasmic" evidence="1">
    <location>
        <begin position="48"/>
        <end position="55"/>
    </location>
</feature>
<feature type="transmembrane region" description="Helical; Name=2" evidence="1">
    <location>
        <begin position="56"/>
        <end position="76"/>
    </location>
</feature>
<feature type="topological domain" description="Extracellular" evidence="1">
    <location>
        <begin position="77"/>
        <end position="100"/>
    </location>
</feature>
<feature type="transmembrane region" description="Helical; Name=3" evidence="1">
    <location>
        <begin position="101"/>
        <end position="121"/>
    </location>
</feature>
<feature type="topological domain" description="Cytoplasmic" evidence="1">
    <location>
        <begin position="122"/>
        <end position="140"/>
    </location>
</feature>
<feature type="transmembrane region" description="Helical; Name=4" evidence="1">
    <location>
        <begin position="141"/>
        <end position="161"/>
    </location>
</feature>
<feature type="topological domain" description="Extracellular" evidence="1">
    <location>
        <begin position="162"/>
        <end position="198"/>
    </location>
</feature>
<feature type="transmembrane region" description="Helical; Name=5" evidence="1">
    <location>
        <begin position="199"/>
        <end position="218"/>
    </location>
</feature>
<feature type="topological domain" description="Cytoplasmic" evidence="1">
    <location>
        <begin position="219"/>
        <end position="237"/>
    </location>
</feature>
<feature type="transmembrane region" description="Helical; Name=6" evidence="1">
    <location>
        <begin position="238"/>
        <end position="258"/>
    </location>
</feature>
<feature type="topological domain" description="Extracellular" evidence="1">
    <location>
        <begin position="259"/>
        <end position="271"/>
    </location>
</feature>
<feature type="transmembrane region" description="Helical; Name=7" evidence="1">
    <location>
        <begin position="272"/>
        <end position="292"/>
    </location>
</feature>
<feature type="topological domain" description="Cytoplasmic" evidence="1">
    <location>
        <begin position="293"/>
        <end position="314"/>
    </location>
</feature>
<feature type="glycosylation site" description="N-linked (GlcNAc...) asparagine" evidence="1">
    <location>
        <position position="5"/>
    </location>
</feature>
<feature type="disulfide bond" evidence="2">
    <location>
        <begin position="98"/>
        <end position="190"/>
    </location>
</feature>
<feature type="sequence variant" id="VAR_053284" description="In dbSNP:rs6660222.">
    <original>V</original>
    <variation>A</variation>
    <location>
        <position position="16"/>
    </location>
</feature>
<feature type="sequence variant" id="VAR_053285" description="In dbSNP:rs41488350.">
    <original>F</original>
    <variation>L</variation>
    <location>
        <position position="65"/>
    </location>
</feature>
<feature type="sequence variant" id="VAR_053286" description="In dbSNP:rs6662597.">
    <original>I</original>
    <variation>V</variation>
    <location>
        <position position="78"/>
    </location>
</feature>
<feature type="sequence variant" id="VAR_053287" description="In dbSNP:rs6662382.">
    <original>I</original>
    <variation>M</variation>
    <location>
        <position position="137"/>
    </location>
</feature>
<feature type="sequence variant" id="VAR_053288" description="In dbSNP:rs12062580.">
    <original>F</original>
    <variation>L</variation>
    <location>
        <position position="155"/>
    </location>
</feature>
<feature type="sequence variant" id="VAR_053289" description="In dbSNP:rs6692949.">
    <original>K</original>
    <variation>N</variation>
    <location>
        <position position="312"/>
    </location>
</feature>
<comment type="function">
    <text evidence="3">Odorant receptor.</text>
</comment>
<comment type="subcellular location">
    <subcellularLocation>
        <location>Cell membrane</location>
        <topology>Multi-pass membrane protein</topology>
    </subcellularLocation>
</comment>
<comment type="similarity">
    <text evidence="2">Belongs to the G-protein coupled receptor 1 family.</text>
</comment>
<comment type="online information" name="Human Olfactory Receptor Data Exploratorium (HORDE)">
    <link uri="http://genome.weizmann.ac.il/horde/card/index/symbol:OR10T2"/>
</comment>
<accession>Q8NGX3</accession>
<accession>Q6IF98</accession>
<keyword id="KW-1003">Cell membrane</keyword>
<keyword id="KW-1015">Disulfide bond</keyword>
<keyword id="KW-0297">G-protein coupled receptor</keyword>
<keyword id="KW-0325">Glycoprotein</keyword>
<keyword id="KW-0472">Membrane</keyword>
<keyword id="KW-0552">Olfaction</keyword>
<keyword id="KW-0675">Receptor</keyword>
<keyword id="KW-1185">Reference proteome</keyword>
<keyword id="KW-0716">Sensory transduction</keyword>
<keyword id="KW-0807">Transducer</keyword>
<keyword id="KW-0812">Transmembrane</keyword>
<keyword id="KW-1133">Transmembrane helix</keyword>
<gene>
    <name type="primary">OR10T2</name>
</gene>
<organism>
    <name type="scientific">Homo sapiens</name>
    <name type="common">Human</name>
    <dbReference type="NCBI Taxonomy" id="9606"/>
    <lineage>
        <taxon>Eukaryota</taxon>
        <taxon>Metazoa</taxon>
        <taxon>Chordata</taxon>
        <taxon>Craniata</taxon>
        <taxon>Vertebrata</taxon>
        <taxon>Euteleostomi</taxon>
        <taxon>Mammalia</taxon>
        <taxon>Eutheria</taxon>
        <taxon>Euarchontoglires</taxon>
        <taxon>Primates</taxon>
        <taxon>Haplorrhini</taxon>
        <taxon>Catarrhini</taxon>
        <taxon>Hominidae</taxon>
        <taxon>Homo</taxon>
    </lineage>
</organism>
<sequence length="314" mass="35011">MRGFNKTTVVTQFILVGFSSLGELQLLLFVIFLLLYLTILVANVTIMAVIRFSWTLHTPMYGFLFILSFSESCYTFVIIPQLLVHLLSDTKTISFMACATQLFFFLGFACTNCLLIAVMGYDRYVAICHPLRYTLIINKRLGLELISLSGATGFFIALVATNLICDMRFCGPNRVNHYFCDMAPVIKLACTDTHVKELALFSLSILVIMVPFLLILISYGFIVNTILKIPSAEGKKAFVTCASHLTVVFVHYGCASIIYLRPKSKSASDKDQLVAVTYTVVTPLLNPLVYSLRNKEVKTALKRVLGMPVATKMS</sequence>
<evidence type="ECO:0000255" key="1"/>
<evidence type="ECO:0000255" key="2">
    <source>
        <dbReference type="PROSITE-ProRule" id="PRU00521"/>
    </source>
</evidence>
<evidence type="ECO:0000305" key="3"/>